<name>TKNA_PELRI</name>
<reference key="1">
    <citation type="journal article" date="1991" name="J. Neurochem.">
        <title>Ranakinin: a novel NK1 tachykinin receptor agonist isolated with neurokinin B from the brain of the frog Rana ridibunda.</title>
        <authorList>
            <person name="O'Harte F."/>
            <person name="Burcher E."/>
            <person name="Lovas S."/>
            <person name="Smith D.D."/>
            <person name="Vaudry H."/>
            <person name="Conlon J.M."/>
        </authorList>
    </citation>
    <scope>PROTEIN SEQUENCE</scope>
    <scope>AMIDATION AT MET-11</scope>
    <source>
        <tissue>Brain</tissue>
    </source>
</reference>
<proteinExistence type="evidence at protein level"/>
<dbReference type="GO" id="GO:0005576">
    <property type="term" value="C:extracellular region"/>
    <property type="evidence" value="ECO:0007669"/>
    <property type="project" value="UniProtKB-SubCell"/>
</dbReference>
<dbReference type="GO" id="GO:0007218">
    <property type="term" value="P:neuropeptide signaling pathway"/>
    <property type="evidence" value="ECO:0007669"/>
    <property type="project" value="UniProtKB-KW"/>
</dbReference>
<dbReference type="GO" id="GO:0007217">
    <property type="term" value="P:tachykinin receptor signaling pathway"/>
    <property type="evidence" value="ECO:0007669"/>
    <property type="project" value="InterPro"/>
</dbReference>
<dbReference type="InterPro" id="IPR013055">
    <property type="entry name" value="Tachy_Neuro_lke_CS"/>
</dbReference>
<dbReference type="InterPro" id="IPR008215">
    <property type="entry name" value="Tachykinin_dom"/>
</dbReference>
<dbReference type="Pfam" id="PF02202">
    <property type="entry name" value="Tachykinin"/>
    <property type="match status" value="1"/>
</dbReference>
<dbReference type="PROSITE" id="PS00267">
    <property type="entry name" value="TACHYKININ"/>
    <property type="match status" value="1"/>
</dbReference>
<accession>P29207</accession>
<sequence length="11" mass="1352">KPNPERFYGLM</sequence>
<organism>
    <name type="scientific">Pelophylax ridibundus</name>
    <name type="common">Marsh frog</name>
    <name type="synonym">Rana ridibunda</name>
    <dbReference type="NCBI Taxonomy" id="8406"/>
    <lineage>
        <taxon>Eukaryota</taxon>
        <taxon>Metazoa</taxon>
        <taxon>Chordata</taxon>
        <taxon>Craniata</taxon>
        <taxon>Vertebrata</taxon>
        <taxon>Euteleostomi</taxon>
        <taxon>Amphibia</taxon>
        <taxon>Batrachia</taxon>
        <taxon>Anura</taxon>
        <taxon>Neobatrachia</taxon>
        <taxon>Ranoidea</taxon>
        <taxon>Ranidae</taxon>
        <taxon>Pelophylax</taxon>
    </lineage>
</organism>
<keyword id="KW-0027">Amidation</keyword>
<keyword id="KW-0903">Direct protein sequencing</keyword>
<keyword id="KW-0527">Neuropeptide</keyword>
<keyword id="KW-0964">Secreted</keyword>
<evidence type="ECO:0000269" key="1">
    <source>
    </source>
</evidence>
<evidence type="ECO:0000305" key="2"/>
<feature type="peptide" id="PRO_0000044417" description="Ranakinin">
    <location>
        <begin position="1"/>
        <end position="11"/>
    </location>
</feature>
<feature type="modified residue" description="Methionine amide" evidence="1">
    <location>
        <position position="11"/>
    </location>
</feature>
<comment type="function">
    <text>Tachykinins are active peptides which excite neurons, evoke behavioral responses, are potent vasodilators and secretagogues, and contract (directly or indirectly) many smooth muscles.</text>
</comment>
<comment type="subcellular location">
    <subcellularLocation>
        <location>Secreted</location>
    </subcellularLocation>
</comment>
<comment type="similarity">
    <text evidence="2">Belongs to the tachykinin family.</text>
</comment>
<protein>
    <recommendedName>
        <fullName>Ranakinin</fullName>
    </recommendedName>
    <alternativeName>
        <fullName>Substance-P-related peptide</fullName>
    </alternativeName>
</protein>